<sequence>MDYVRTQVEAVFDDSEQDGSTISESGSCDSSSDRSFADELGLMELLEGDKAHDLIYRNCKSGLGDQCQILSVLRNGFRNVGSRAKLKTFQVFQEAVQMKHGGDGGAKVKYGWCSVSKHELKTIFEYGFSEPLRNDGSFGRGLYLSPDNSPLDCLKDSASESEDGMRFLLLCRVLLGKSEIVPQGSTRSCPSSPEFDSGVDDLVSTKKYIVWSTHMNTHVLPEFLVCIKAPFNLTRSPKRLRSPWMAFPVLIKALSKFLPPSQILVIQKHYKDQQNRRITRSELIQRVRSITGDKLLVHIIKACGHKVQH</sequence>
<evidence type="ECO:0000250" key="1"/>
<evidence type="ECO:0000255" key="2">
    <source>
        <dbReference type="PROSITE-ProRule" id="PRU00397"/>
    </source>
</evidence>
<evidence type="ECO:0000255" key="3">
    <source>
        <dbReference type="PROSITE-ProRule" id="PRU01227"/>
    </source>
</evidence>
<evidence type="ECO:0000269" key="4">
    <source>
    </source>
</evidence>
<evidence type="ECO:0000303" key="5">
    <source>
    </source>
</evidence>
<evidence type="ECO:0000305" key="6"/>
<protein>
    <recommendedName>
        <fullName>Probable inactive poly [ADP-ribose] polymerase SRO5</fullName>
    </recommendedName>
    <alternativeName>
        <fullName>Protein SIMILAR TO RCD ONE 5</fullName>
    </alternativeName>
</protein>
<feature type="chain" id="PRO_0000410423" description="Probable inactive poly [ADP-ribose] polymerase SRO5">
    <location>
        <begin position="1"/>
        <end position="309"/>
    </location>
</feature>
<feature type="domain" description="PARP catalytic" evidence="2">
    <location>
        <begin position="28"/>
        <end position="255"/>
    </location>
</feature>
<feature type="domain" description="RST" evidence="3">
    <location>
        <begin position="238"/>
        <end position="309"/>
    </location>
</feature>
<feature type="splice variant" id="VSP_041442" description="In isoform 2." evidence="5">
    <original>SPKRLR</original>
    <variation>KQNQNL</variation>
    <location>
        <begin position="236"/>
        <end position="241"/>
    </location>
</feature>
<feature type="splice variant" id="VSP_041443" description="In isoform 2." evidence="5">
    <location>
        <begin position="242"/>
        <end position="309"/>
    </location>
</feature>
<feature type="sequence conflict" description="In Ref. 5; AAM64396." evidence="6" ref="5">
    <original>Y</original>
    <variation>F</variation>
    <location>
        <position position="56"/>
    </location>
</feature>
<feature type="sequence conflict" description="In Ref. 5; AAM64396." evidence="6" ref="5">
    <original>D</original>
    <variation>H</variation>
    <location>
        <position position="103"/>
    </location>
</feature>
<feature type="sequence conflict" description="In Ref. 5; AAM64396." evidence="6" ref="5">
    <original>P</original>
    <variation>L</variation>
    <location>
        <position position="230"/>
    </location>
</feature>
<feature type="sequence conflict" description="In Ref. 5; AAM64396." evidence="6" ref="5">
    <original>A</original>
    <variation>T</variation>
    <location>
        <position position="253"/>
    </location>
</feature>
<proteinExistence type="evidence at protein level"/>
<organism>
    <name type="scientific">Arabidopsis thaliana</name>
    <name type="common">Mouse-ear cress</name>
    <dbReference type="NCBI Taxonomy" id="3702"/>
    <lineage>
        <taxon>Eukaryota</taxon>
        <taxon>Viridiplantae</taxon>
        <taxon>Streptophyta</taxon>
        <taxon>Embryophyta</taxon>
        <taxon>Tracheophyta</taxon>
        <taxon>Spermatophyta</taxon>
        <taxon>Magnoliopsida</taxon>
        <taxon>eudicotyledons</taxon>
        <taxon>Gunneridae</taxon>
        <taxon>Pentapetalae</taxon>
        <taxon>rosids</taxon>
        <taxon>malvids</taxon>
        <taxon>Brassicales</taxon>
        <taxon>Brassicaceae</taxon>
        <taxon>Camelineae</taxon>
        <taxon>Arabidopsis</taxon>
    </lineage>
</organism>
<accession>Q9FJJ3</accession>
<accession>F4K6I7</accession>
<accession>Q8LCY5</accession>
<name>SRO5_ARATH</name>
<dbReference type="EMBL" id="AB015469">
    <property type="protein sequence ID" value="BAB11502.1"/>
    <property type="molecule type" value="Genomic_DNA"/>
</dbReference>
<dbReference type="EMBL" id="CP002688">
    <property type="protein sequence ID" value="AED97617.1"/>
    <property type="molecule type" value="Genomic_DNA"/>
</dbReference>
<dbReference type="EMBL" id="CP002688">
    <property type="protein sequence ID" value="AED97618.1"/>
    <property type="molecule type" value="Genomic_DNA"/>
</dbReference>
<dbReference type="EMBL" id="AF446893">
    <property type="protein sequence ID" value="AAL38626.1"/>
    <property type="molecule type" value="mRNA"/>
</dbReference>
<dbReference type="EMBL" id="AY052687">
    <property type="protein sequence ID" value="AAK96591.1"/>
    <property type="molecule type" value="mRNA"/>
</dbReference>
<dbReference type="EMBL" id="BX831989">
    <property type="status" value="NOT_ANNOTATED_CDS"/>
    <property type="molecule type" value="mRNA"/>
</dbReference>
<dbReference type="EMBL" id="AY086327">
    <property type="protein sequence ID" value="AAM64396.1"/>
    <property type="molecule type" value="mRNA"/>
</dbReference>
<dbReference type="RefSeq" id="NP_201058.1">
    <molecule id="Q9FJJ3-1"/>
    <property type="nucleotide sequence ID" value="NM_125646.3"/>
</dbReference>
<dbReference type="RefSeq" id="NP_974981.1">
    <molecule id="Q9FJJ3-2"/>
    <property type="nucleotide sequence ID" value="NM_203252.1"/>
</dbReference>
<dbReference type="SMR" id="Q9FJJ3"/>
<dbReference type="BioGRID" id="21616">
    <property type="interactions" value="4"/>
</dbReference>
<dbReference type="FunCoup" id="Q9FJJ3">
    <property type="interactions" value="2"/>
</dbReference>
<dbReference type="IntAct" id="Q9FJJ3">
    <property type="interactions" value="6"/>
</dbReference>
<dbReference type="STRING" id="3702.Q9FJJ3"/>
<dbReference type="PaxDb" id="3702-AT5G62520.1"/>
<dbReference type="EnsemblPlants" id="AT5G62520.1">
    <molecule id="Q9FJJ3-1"/>
    <property type="protein sequence ID" value="AT5G62520.1"/>
    <property type="gene ID" value="AT5G62520"/>
</dbReference>
<dbReference type="EnsemblPlants" id="AT5G62520.2">
    <molecule id="Q9FJJ3-2"/>
    <property type="protein sequence ID" value="AT5G62520.2"/>
    <property type="gene ID" value="AT5G62520"/>
</dbReference>
<dbReference type="GeneID" id="836372"/>
<dbReference type="Gramene" id="AT5G62520.1">
    <molecule id="Q9FJJ3-1"/>
    <property type="protein sequence ID" value="AT5G62520.1"/>
    <property type="gene ID" value="AT5G62520"/>
</dbReference>
<dbReference type="Gramene" id="AT5G62520.2">
    <molecule id="Q9FJJ3-2"/>
    <property type="protein sequence ID" value="AT5G62520.2"/>
    <property type="gene ID" value="AT5G62520"/>
</dbReference>
<dbReference type="KEGG" id="ath:AT5G62520"/>
<dbReference type="Araport" id="AT5G62520"/>
<dbReference type="TAIR" id="AT5G62520">
    <property type="gene designation" value="SRO5"/>
</dbReference>
<dbReference type="eggNOG" id="ENOG502QTKK">
    <property type="taxonomic scope" value="Eukaryota"/>
</dbReference>
<dbReference type="HOGENOM" id="CLU_062533_0_0_1"/>
<dbReference type="InParanoid" id="Q9FJJ3"/>
<dbReference type="OMA" id="DHRENKI"/>
<dbReference type="OrthoDB" id="6133115at2759"/>
<dbReference type="PhylomeDB" id="Q9FJJ3"/>
<dbReference type="PRO" id="PR:Q9FJJ3"/>
<dbReference type="Proteomes" id="UP000006548">
    <property type="component" value="Chromosome 5"/>
</dbReference>
<dbReference type="ExpressionAtlas" id="Q9FJJ3">
    <property type="expression patterns" value="baseline and differential"/>
</dbReference>
<dbReference type="GO" id="GO:0005739">
    <property type="term" value="C:mitochondrion"/>
    <property type="evidence" value="ECO:0000314"/>
    <property type="project" value="TAIR"/>
</dbReference>
<dbReference type="GO" id="GO:0016363">
    <property type="term" value="C:nuclear matrix"/>
    <property type="evidence" value="ECO:0007669"/>
    <property type="project" value="UniProtKB-SubCell"/>
</dbReference>
<dbReference type="GO" id="GO:0003950">
    <property type="term" value="F:NAD+ poly-ADP-ribosyltransferase activity"/>
    <property type="evidence" value="ECO:0007669"/>
    <property type="project" value="InterPro"/>
</dbReference>
<dbReference type="GO" id="GO:0071456">
    <property type="term" value="P:cellular response to hypoxia"/>
    <property type="evidence" value="ECO:0007007"/>
    <property type="project" value="TAIR"/>
</dbReference>
<dbReference type="GO" id="GO:0072593">
    <property type="term" value="P:reactive oxygen species metabolic process"/>
    <property type="evidence" value="ECO:0000315"/>
    <property type="project" value="TAIR"/>
</dbReference>
<dbReference type="GO" id="GO:0009651">
    <property type="term" value="P:response to salt stress"/>
    <property type="evidence" value="ECO:0000270"/>
    <property type="project" value="TAIR"/>
</dbReference>
<dbReference type="Gene3D" id="3.90.228.10">
    <property type="match status" value="1"/>
</dbReference>
<dbReference type="InterPro" id="IPR012317">
    <property type="entry name" value="Poly(ADP-ribose)pol_cat_dom"/>
</dbReference>
<dbReference type="InterPro" id="IPR044964">
    <property type="entry name" value="RCD1/SRO1-5"/>
</dbReference>
<dbReference type="InterPro" id="IPR022003">
    <property type="entry name" value="RST"/>
</dbReference>
<dbReference type="PANTHER" id="PTHR32263">
    <property type="entry name" value="INACTIVE POLY [ADP-RIBOSE] POLYMERASE SRO4-RELATED"/>
    <property type="match status" value="1"/>
</dbReference>
<dbReference type="PANTHER" id="PTHR32263:SF12">
    <property type="entry name" value="INACTIVE POLY [ADP-RIBOSE] POLYMERASE SRO4-RELATED"/>
    <property type="match status" value="1"/>
</dbReference>
<dbReference type="Pfam" id="PF12174">
    <property type="entry name" value="RST"/>
    <property type="match status" value="1"/>
</dbReference>
<dbReference type="SUPFAM" id="SSF56399">
    <property type="entry name" value="ADP-ribosylation"/>
    <property type="match status" value="1"/>
</dbReference>
<dbReference type="PROSITE" id="PS51059">
    <property type="entry name" value="PARP_CATALYTIC"/>
    <property type="match status" value="1"/>
</dbReference>
<dbReference type="PROSITE" id="PS51879">
    <property type="entry name" value="RST"/>
    <property type="match status" value="1"/>
</dbReference>
<keyword id="KW-0025">Alternative splicing</keyword>
<keyword id="KW-0217">Developmental protein</keyword>
<keyword id="KW-0539">Nucleus</keyword>
<keyword id="KW-1185">Reference proteome</keyword>
<keyword id="KW-0346">Stress response</keyword>
<reference key="1">
    <citation type="journal article" date="1998" name="DNA Res.">
        <title>Structural analysis of Arabidopsis thaliana chromosome 5. VII. Sequence features of the regions of 1,013,767 bp covered by sixteen physically assigned P1 and TAC clones.</title>
        <authorList>
            <person name="Nakamura Y."/>
            <person name="Sato S."/>
            <person name="Asamizu E."/>
            <person name="Kaneko T."/>
            <person name="Kotani H."/>
            <person name="Miyajima N."/>
            <person name="Tabata S."/>
        </authorList>
    </citation>
    <scope>NUCLEOTIDE SEQUENCE [LARGE SCALE GENOMIC DNA]</scope>
    <source>
        <strain>cv. Columbia</strain>
    </source>
</reference>
<reference key="2">
    <citation type="journal article" date="2017" name="Plant J.">
        <title>Araport11: a complete reannotation of the Arabidopsis thaliana reference genome.</title>
        <authorList>
            <person name="Cheng C.Y."/>
            <person name="Krishnakumar V."/>
            <person name="Chan A.P."/>
            <person name="Thibaud-Nissen F."/>
            <person name="Schobel S."/>
            <person name="Town C.D."/>
        </authorList>
    </citation>
    <scope>GENOME REANNOTATION</scope>
    <source>
        <strain>cv. Columbia</strain>
    </source>
</reference>
<reference key="3">
    <citation type="journal article" date="2003" name="Science">
        <title>Empirical analysis of transcriptional activity in the Arabidopsis genome.</title>
        <authorList>
            <person name="Yamada K."/>
            <person name="Lim J."/>
            <person name="Dale J.M."/>
            <person name="Chen H."/>
            <person name="Shinn P."/>
            <person name="Palm C.J."/>
            <person name="Southwick A.M."/>
            <person name="Wu H.C."/>
            <person name="Kim C.J."/>
            <person name="Nguyen M."/>
            <person name="Pham P.K."/>
            <person name="Cheuk R.F."/>
            <person name="Karlin-Newmann G."/>
            <person name="Liu S.X."/>
            <person name="Lam B."/>
            <person name="Sakano H."/>
            <person name="Wu T."/>
            <person name="Yu G."/>
            <person name="Miranda M."/>
            <person name="Quach H.L."/>
            <person name="Tripp M."/>
            <person name="Chang C.H."/>
            <person name="Lee J.M."/>
            <person name="Toriumi M.J."/>
            <person name="Chan M.M."/>
            <person name="Tang C.C."/>
            <person name="Onodera C.S."/>
            <person name="Deng J.M."/>
            <person name="Akiyama K."/>
            <person name="Ansari Y."/>
            <person name="Arakawa T."/>
            <person name="Banh J."/>
            <person name="Banno F."/>
            <person name="Bowser L."/>
            <person name="Brooks S.Y."/>
            <person name="Carninci P."/>
            <person name="Chao Q."/>
            <person name="Choy N."/>
            <person name="Enju A."/>
            <person name="Goldsmith A.D."/>
            <person name="Gurjal M."/>
            <person name="Hansen N.F."/>
            <person name="Hayashizaki Y."/>
            <person name="Johnson-Hopson C."/>
            <person name="Hsuan V.W."/>
            <person name="Iida K."/>
            <person name="Karnes M."/>
            <person name="Khan S."/>
            <person name="Koesema E."/>
            <person name="Ishida J."/>
            <person name="Jiang P.X."/>
            <person name="Jones T."/>
            <person name="Kawai J."/>
            <person name="Kamiya A."/>
            <person name="Meyers C."/>
            <person name="Nakajima M."/>
            <person name="Narusaka M."/>
            <person name="Seki M."/>
            <person name="Sakurai T."/>
            <person name="Satou M."/>
            <person name="Tamse R."/>
            <person name="Vaysberg M."/>
            <person name="Wallender E.K."/>
            <person name="Wong C."/>
            <person name="Yamamura Y."/>
            <person name="Yuan S."/>
            <person name="Shinozaki K."/>
            <person name="Davis R.W."/>
            <person name="Theologis A."/>
            <person name="Ecker J.R."/>
        </authorList>
    </citation>
    <scope>NUCLEOTIDE SEQUENCE [LARGE SCALE MRNA] (ISOFORM 1)</scope>
    <source>
        <strain>cv. Columbia</strain>
    </source>
</reference>
<reference key="4">
    <citation type="journal article" date="2004" name="Genome Res.">
        <title>Whole genome sequence comparisons and 'full-length' cDNA sequences: a combined approach to evaluate and improve Arabidopsis genome annotation.</title>
        <authorList>
            <person name="Castelli V."/>
            <person name="Aury J.-M."/>
            <person name="Jaillon O."/>
            <person name="Wincker P."/>
            <person name="Clepet C."/>
            <person name="Menard M."/>
            <person name="Cruaud C."/>
            <person name="Quetier F."/>
            <person name="Scarpelli C."/>
            <person name="Schaechter V."/>
            <person name="Temple G."/>
            <person name="Caboche M."/>
            <person name="Weissenbach J."/>
            <person name="Salanoubat M."/>
        </authorList>
    </citation>
    <scope>NUCLEOTIDE SEQUENCE [LARGE SCALE MRNA] (ISOFORM 2)</scope>
    <source>
        <strain>cv. Columbia</strain>
    </source>
</reference>
<reference key="5">
    <citation type="submission" date="2002-03" db="EMBL/GenBank/DDBJ databases">
        <title>Full-length cDNA from Arabidopsis thaliana.</title>
        <authorList>
            <person name="Brover V.V."/>
            <person name="Troukhan M.E."/>
            <person name="Alexandrov N.A."/>
            <person name="Lu Y.-P."/>
            <person name="Flavell R.B."/>
            <person name="Feldmann K.A."/>
        </authorList>
    </citation>
    <scope>NUCLEOTIDE SEQUENCE [LARGE SCALE MRNA] (ISOFORM 1)</scope>
</reference>
<reference key="6">
    <citation type="journal article" date="2010" name="BMC Genomics">
        <title>The RST and PARP-like domain containing SRO protein family: analysis of protein structure, function and conservation in land plants.</title>
        <authorList>
            <person name="Jaspers P."/>
            <person name="Overmyer K."/>
            <person name="Wrzaczek M."/>
            <person name="Vainonen J.P."/>
            <person name="Blomster T."/>
            <person name="Salojaervi J."/>
            <person name="Reddy R.A."/>
            <person name="Kangasjaervi J."/>
        </authorList>
    </citation>
    <scope>SUBCELLULAR LOCATION</scope>
    <scope>SUBUNIT</scope>
    <scope>INDUCTION</scope>
</reference>
<gene>
    <name type="primary">SRO5</name>
    <name type="ordered locus">At5g62520</name>
    <name type="ORF">K19B1.13</name>
</gene>
<comment type="function">
    <text evidence="1">Probable inactive ADP-ribosyltransferase that may be involved in stress and developmental responses.</text>
</comment>
<comment type="subunit">
    <text evidence="4">Interacts with dehydration-responsive DREB2 proteins and a number of transcription factors belonging to several protein families.</text>
</comment>
<comment type="interaction">
    <interactant intactId="EBI-4434999">
        <id>Q9FJJ3</id>
    </interactant>
    <interactant intactId="EBI-4473692">
        <id>O80575</id>
        <label>At2g44050</label>
    </interactant>
    <organismsDiffer>false</organismsDiffer>
    <experiments>3</experiments>
</comment>
<comment type="interaction">
    <interactant intactId="EBI-4434999">
        <id>Q9FJJ3</id>
    </interactant>
    <interactant intactId="EBI-617608">
        <id>Q38830</id>
        <label>IAA12</label>
    </interactant>
    <organismsDiffer>false</organismsDiffer>
    <experiments>3</experiments>
</comment>
<comment type="interaction">
    <interactant intactId="EBI-4434999">
        <id>Q9FJJ3</id>
    </interactant>
    <interactant intactId="EBI-15410392">
        <id>Q9FLR1</id>
        <label>MYB29</label>
    </interactant>
    <organismsDiffer>false</organismsDiffer>
    <experiments>3</experiments>
</comment>
<comment type="interaction">
    <interactant intactId="EBI-4434999">
        <id>Q9FJJ3</id>
    </interactant>
    <interactant intactId="EBI-25506855">
        <id>O23160</id>
        <label>MYB73</label>
    </interactant>
    <organismsDiffer>false</organismsDiffer>
    <experiments>3</experiments>
</comment>
<comment type="subcellular location">
    <subcellularLocation>
        <location evidence="4">Nucleus matrix</location>
    </subcellularLocation>
    <text>Speckle-like pattern.</text>
</comment>
<comment type="alternative products">
    <event type="alternative splicing"/>
    <isoform>
        <id>Q9FJJ3-1</id>
        <name>1</name>
        <sequence type="displayed"/>
    </isoform>
    <isoform>
        <id>Q9FJJ3-2</id>
        <name>2</name>
        <sequence type="described" ref="VSP_041442 VSP_041443"/>
    </isoform>
</comment>
<comment type="induction">
    <text evidence="4">By salt stress and light.</text>
</comment>
<comment type="caution">
    <text evidence="6">Lacks the conserved catalytic triad His-Tyr-Glu of the active site.</text>
</comment>
<comment type="sequence caution" evidence="6">
    <conflict type="miscellaneous discrepancy">
        <sequence resource="EMBL" id="BX831989"/>
    </conflict>
    <text>Sequencing errors.</text>
</comment>